<sequence length="488" mass="54198">MNLEETMPLVFERSIPGRIGFSLPESDVPETNAGDYFDQAYIRSIPADLPELSELEIMRHYTNLSNHNFGVDSGFYPLGSCTMKYNPKINEKVARFPGFANIHPNQPESSVQGALELLYDLQTSLVEITGMDEVTLQPAAGAHGEWTGLMLIRAFHEKNGDTKRTKVIIPDSAHGTNPASAAVAGFDVVTVKSNEKGLVDVADLKKVVGEDTAALMLTNPNTLGLFEKDIVEMAEIVHEAGGKLYYDGANLNAIMAKVRPGDMGFDVVHLNLHKTFTGPHGGGGPGSGPIGVKKELIPFLPTPVLTKKEDIYTFDYNYPDSIGRVKPYYGNFGINVRAYTYIRTMGPDGLKLVTEYAVLNANYMMRKLQEAYDLPFDQVCKHEFVLSGNRQKKLGVRTVDIAKRLLDHNFHPPTVYFPLIVGEAIMIEPTETESKETLDSFIDTMLKIAKEAEENPEIVQEAPHSTYVKRLDETRAARKPILRYQKEV</sequence>
<evidence type="ECO:0000255" key="1">
    <source>
        <dbReference type="HAMAP-Rule" id="MF_00713"/>
    </source>
</evidence>
<reference key="1">
    <citation type="journal article" date="2001" name="Science">
        <title>Comparative genomics of Listeria species.</title>
        <authorList>
            <person name="Glaser P."/>
            <person name="Frangeul L."/>
            <person name="Buchrieser C."/>
            <person name="Rusniok C."/>
            <person name="Amend A."/>
            <person name="Baquero F."/>
            <person name="Berche P."/>
            <person name="Bloecker H."/>
            <person name="Brandt P."/>
            <person name="Chakraborty T."/>
            <person name="Charbit A."/>
            <person name="Chetouani F."/>
            <person name="Couve E."/>
            <person name="de Daruvar A."/>
            <person name="Dehoux P."/>
            <person name="Domann E."/>
            <person name="Dominguez-Bernal G."/>
            <person name="Duchaud E."/>
            <person name="Durant L."/>
            <person name="Dussurget O."/>
            <person name="Entian K.-D."/>
            <person name="Fsihi H."/>
            <person name="Garcia-del Portillo F."/>
            <person name="Garrido P."/>
            <person name="Gautier L."/>
            <person name="Goebel W."/>
            <person name="Gomez-Lopez N."/>
            <person name="Hain T."/>
            <person name="Hauf J."/>
            <person name="Jackson D."/>
            <person name="Jones L.-M."/>
            <person name="Kaerst U."/>
            <person name="Kreft J."/>
            <person name="Kuhn M."/>
            <person name="Kunst F."/>
            <person name="Kurapkat G."/>
            <person name="Madueno E."/>
            <person name="Maitournam A."/>
            <person name="Mata Vicente J."/>
            <person name="Ng E."/>
            <person name="Nedjari H."/>
            <person name="Nordsiek G."/>
            <person name="Novella S."/>
            <person name="de Pablos B."/>
            <person name="Perez-Diaz J.-C."/>
            <person name="Purcell R."/>
            <person name="Remmel B."/>
            <person name="Rose M."/>
            <person name="Schlueter T."/>
            <person name="Simoes N."/>
            <person name="Tierrez A."/>
            <person name="Vazquez-Boland J.-A."/>
            <person name="Voss H."/>
            <person name="Wehland J."/>
            <person name="Cossart P."/>
        </authorList>
    </citation>
    <scope>NUCLEOTIDE SEQUENCE [LARGE SCALE GENOMIC DNA]</scope>
    <source>
        <strain>ATCC BAA-679 / EGD-e</strain>
    </source>
</reference>
<protein>
    <recommendedName>
        <fullName evidence="1">Probable glycine dehydrogenase (decarboxylating) subunit 2</fullName>
        <ecNumber evidence="1">1.4.4.2</ecNumber>
    </recommendedName>
    <alternativeName>
        <fullName evidence="1">Glycine cleavage system P-protein subunit 2</fullName>
    </alternativeName>
    <alternativeName>
        <fullName evidence="1">Glycine decarboxylase subunit 2</fullName>
    </alternativeName>
    <alternativeName>
        <fullName evidence="1">Glycine dehydrogenase (aminomethyl-transferring) subunit 2</fullName>
    </alternativeName>
</protein>
<keyword id="KW-0560">Oxidoreductase</keyword>
<keyword id="KW-0663">Pyridoxal phosphate</keyword>
<keyword id="KW-1185">Reference proteome</keyword>
<organism>
    <name type="scientific">Listeria monocytogenes serovar 1/2a (strain ATCC BAA-679 / EGD-e)</name>
    <dbReference type="NCBI Taxonomy" id="169963"/>
    <lineage>
        <taxon>Bacteria</taxon>
        <taxon>Bacillati</taxon>
        <taxon>Bacillota</taxon>
        <taxon>Bacilli</taxon>
        <taxon>Bacillales</taxon>
        <taxon>Listeriaceae</taxon>
        <taxon>Listeria</taxon>
    </lineage>
</organism>
<feature type="chain" id="PRO_0000167007" description="Probable glycine dehydrogenase (decarboxylating) subunit 2">
    <location>
        <begin position="1"/>
        <end position="488"/>
    </location>
</feature>
<feature type="modified residue" description="N6-(pyridoxal phosphate)lysine" evidence="1">
    <location>
        <position position="274"/>
    </location>
</feature>
<gene>
    <name evidence="1" type="primary">gcvPB</name>
    <name type="ordered locus">lmo1350</name>
</gene>
<comment type="function">
    <text evidence="1">The glycine cleavage system catalyzes the degradation of glycine. The P protein binds the alpha-amino group of glycine through its pyridoxal phosphate cofactor; CO(2) is released and the remaining methylamine moiety is then transferred to the lipoamide cofactor of the H protein.</text>
</comment>
<comment type="catalytic activity">
    <reaction evidence="1">
        <text>N(6)-[(R)-lipoyl]-L-lysyl-[glycine-cleavage complex H protein] + glycine + H(+) = N(6)-[(R)-S(8)-aminomethyldihydrolipoyl]-L-lysyl-[glycine-cleavage complex H protein] + CO2</text>
        <dbReference type="Rhea" id="RHEA:24304"/>
        <dbReference type="Rhea" id="RHEA-COMP:10494"/>
        <dbReference type="Rhea" id="RHEA-COMP:10495"/>
        <dbReference type="ChEBI" id="CHEBI:15378"/>
        <dbReference type="ChEBI" id="CHEBI:16526"/>
        <dbReference type="ChEBI" id="CHEBI:57305"/>
        <dbReference type="ChEBI" id="CHEBI:83099"/>
        <dbReference type="ChEBI" id="CHEBI:83143"/>
        <dbReference type="EC" id="1.4.4.2"/>
    </reaction>
</comment>
<comment type="cofactor">
    <cofactor evidence="1">
        <name>pyridoxal 5'-phosphate</name>
        <dbReference type="ChEBI" id="CHEBI:597326"/>
    </cofactor>
</comment>
<comment type="subunit">
    <text evidence="1">The glycine cleavage system is composed of four proteins: P, T, L and H. In this organism, the P 'protein' is a heterodimer of two subunits.</text>
</comment>
<comment type="similarity">
    <text evidence="1">Belongs to the GcvP family. C-terminal subunit subfamily.</text>
</comment>
<proteinExistence type="inferred from homology"/>
<accession>Q8Y7D3</accession>
<name>GCSPB_LISMO</name>
<dbReference type="EC" id="1.4.4.2" evidence="1"/>
<dbReference type="EMBL" id="AL591978">
    <property type="protein sequence ID" value="CAC99428.1"/>
    <property type="molecule type" value="Genomic_DNA"/>
</dbReference>
<dbReference type="PIR" id="AF1243">
    <property type="entry name" value="AF1243"/>
</dbReference>
<dbReference type="RefSeq" id="NP_464875.1">
    <property type="nucleotide sequence ID" value="NC_003210.1"/>
</dbReference>
<dbReference type="RefSeq" id="WP_003722477.1">
    <property type="nucleotide sequence ID" value="NZ_CP149495.1"/>
</dbReference>
<dbReference type="SMR" id="Q8Y7D3"/>
<dbReference type="STRING" id="169963.gene:17594007"/>
<dbReference type="PaxDb" id="169963-lmo1350"/>
<dbReference type="EnsemblBacteria" id="CAC99428">
    <property type="protein sequence ID" value="CAC99428"/>
    <property type="gene ID" value="CAC99428"/>
</dbReference>
<dbReference type="GeneID" id="987740"/>
<dbReference type="KEGG" id="lmo:lmo1350"/>
<dbReference type="PATRIC" id="fig|169963.11.peg.1387"/>
<dbReference type="eggNOG" id="COG1003">
    <property type="taxonomic scope" value="Bacteria"/>
</dbReference>
<dbReference type="HOGENOM" id="CLU_004620_5_0_9"/>
<dbReference type="OrthoDB" id="9801272at2"/>
<dbReference type="PhylomeDB" id="Q8Y7D3"/>
<dbReference type="BioCyc" id="LMON169963:LMO1350-MONOMER"/>
<dbReference type="Proteomes" id="UP000000817">
    <property type="component" value="Chromosome"/>
</dbReference>
<dbReference type="GO" id="GO:0005829">
    <property type="term" value="C:cytosol"/>
    <property type="evidence" value="ECO:0000318"/>
    <property type="project" value="GO_Central"/>
</dbReference>
<dbReference type="GO" id="GO:0005960">
    <property type="term" value="C:glycine cleavage complex"/>
    <property type="evidence" value="ECO:0000318"/>
    <property type="project" value="GO_Central"/>
</dbReference>
<dbReference type="GO" id="GO:0016594">
    <property type="term" value="F:glycine binding"/>
    <property type="evidence" value="ECO:0000318"/>
    <property type="project" value="GO_Central"/>
</dbReference>
<dbReference type="GO" id="GO:0004375">
    <property type="term" value="F:glycine dehydrogenase (decarboxylating) activity"/>
    <property type="evidence" value="ECO:0000318"/>
    <property type="project" value="GO_Central"/>
</dbReference>
<dbReference type="GO" id="GO:0030170">
    <property type="term" value="F:pyridoxal phosphate binding"/>
    <property type="evidence" value="ECO:0000318"/>
    <property type="project" value="GO_Central"/>
</dbReference>
<dbReference type="GO" id="GO:0019464">
    <property type="term" value="P:glycine decarboxylation via glycine cleavage system"/>
    <property type="evidence" value="ECO:0000318"/>
    <property type="project" value="GO_Central"/>
</dbReference>
<dbReference type="CDD" id="cd00613">
    <property type="entry name" value="GDC-P"/>
    <property type="match status" value="1"/>
</dbReference>
<dbReference type="FunFam" id="3.40.640.10:FF:000034">
    <property type="entry name" value="Probable glycine dehydrogenase (decarboxylating) subunit 2"/>
    <property type="match status" value="1"/>
</dbReference>
<dbReference type="FunFam" id="3.90.1150.10:FF:000014">
    <property type="entry name" value="Probable glycine dehydrogenase (decarboxylating) subunit 2"/>
    <property type="match status" value="1"/>
</dbReference>
<dbReference type="Gene3D" id="6.20.440.10">
    <property type="match status" value="1"/>
</dbReference>
<dbReference type="Gene3D" id="3.90.1150.10">
    <property type="entry name" value="Aspartate Aminotransferase, domain 1"/>
    <property type="match status" value="1"/>
</dbReference>
<dbReference type="Gene3D" id="3.40.640.10">
    <property type="entry name" value="Type I PLP-dependent aspartate aminotransferase-like (Major domain)"/>
    <property type="match status" value="1"/>
</dbReference>
<dbReference type="HAMAP" id="MF_00713">
    <property type="entry name" value="GcvPB"/>
    <property type="match status" value="1"/>
</dbReference>
<dbReference type="InterPro" id="IPR023012">
    <property type="entry name" value="GcvPB"/>
</dbReference>
<dbReference type="InterPro" id="IPR049316">
    <property type="entry name" value="GDC-P_C"/>
</dbReference>
<dbReference type="InterPro" id="IPR049315">
    <property type="entry name" value="GDC-P_N"/>
</dbReference>
<dbReference type="InterPro" id="IPR020581">
    <property type="entry name" value="GDC_P"/>
</dbReference>
<dbReference type="InterPro" id="IPR015424">
    <property type="entry name" value="PyrdxlP-dep_Trfase"/>
</dbReference>
<dbReference type="InterPro" id="IPR015421">
    <property type="entry name" value="PyrdxlP-dep_Trfase_major"/>
</dbReference>
<dbReference type="InterPro" id="IPR015422">
    <property type="entry name" value="PyrdxlP-dep_Trfase_small"/>
</dbReference>
<dbReference type="NCBIfam" id="NF003346">
    <property type="entry name" value="PRK04366.1"/>
    <property type="match status" value="1"/>
</dbReference>
<dbReference type="PANTHER" id="PTHR11773:SF1">
    <property type="entry name" value="GLYCINE DEHYDROGENASE (DECARBOXYLATING), MITOCHONDRIAL"/>
    <property type="match status" value="1"/>
</dbReference>
<dbReference type="PANTHER" id="PTHR11773">
    <property type="entry name" value="GLYCINE DEHYDROGENASE, DECARBOXYLATING"/>
    <property type="match status" value="1"/>
</dbReference>
<dbReference type="Pfam" id="PF21478">
    <property type="entry name" value="GcvP2_C"/>
    <property type="match status" value="1"/>
</dbReference>
<dbReference type="Pfam" id="PF02347">
    <property type="entry name" value="GDC-P"/>
    <property type="match status" value="1"/>
</dbReference>
<dbReference type="SUPFAM" id="SSF53383">
    <property type="entry name" value="PLP-dependent transferases"/>
    <property type="match status" value="1"/>
</dbReference>